<proteinExistence type="inferred from homology"/>
<keyword id="KW-0687">Ribonucleoprotein</keyword>
<keyword id="KW-0689">Ribosomal protein</keyword>
<keyword id="KW-0694">RNA-binding</keyword>
<keyword id="KW-0699">rRNA-binding</keyword>
<protein>
    <recommendedName>
        <fullName evidence="1">Large ribosomal subunit protein uL2</fullName>
    </recommendedName>
    <alternativeName>
        <fullName evidence="3">50S ribosomal protein L2</fullName>
    </alternativeName>
</protein>
<reference key="1">
    <citation type="journal article" date="2008" name="DNA Res.">
        <title>Comparative genome analysis of Lactobacillus reuteri and Lactobacillus fermentum reveal a genomic island for reuterin and cobalamin production.</title>
        <authorList>
            <person name="Morita H."/>
            <person name="Toh H."/>
            <person name="Fukuda S."/>
            <person name="Horikawa H."/>
            <person name="Oshima K."/>
            <person name="Suzuki T."/>
            <person name="Murakami M."/>
            <person name="Hisamatsu S."/>
            <person name="Kato Y."/>
            <person name="Takizawa T."/>
            <person name="Fukuoka H."/>
            <person name="Yoshimura T."/>
            <person name="Itoh K."/>
            <person name="O'Sullivan D.J."/>
            <person name="McKay L.L."/>
            <person name="Ohno H."/>
            <person name="Kikuchi J."/>
            <person name="Masaoka T."/>
            <person name="Hattori M."/>
        </authorList>
    </citation>
    <scope>NUCLEOTIDE SEQUENCE [LARGE SCALE GENOMIC DNA]</scope>
    <source>
        <strain>JCM 1112</strain>
    </source>
</reference>
<gene>
    <name evidence="1" type="primary">rplB</name>
    <name type="ordered locus">LAR_1391</name>
</gene>
<feature type="chain" id="PRO_1000141571" description="Large ribosomal subunit protein uL2">
    <location>
        <begin position="1"/>
        <end position="281"/>
    </location>
</feature>
<feature type="region of interest" description="Disordered" evidence="2">
    <location>
        <begin position="210"/>
        <end position="281"/>
    </location>
</feature>
<feature type="compositionally biased region" description="Basic residues" evidence="2">
    <location>
        <begin position="254"/>
        <end position="281"/>
    </location>
</feature>
<comment type="function">
    <text evidence="1">One of the primary rRNA binding proteins. Required for association of the 30S and 50S subunits to form the 70S ribosome, for tRNA binding and peptide bond formation. It has been suggested to have peptidyltransferase activity; this is somewhat controversial. Makes several contacts with the 16S rRNA in the 70S ribosome.</text>
</comment>
<comment type="subunit">
    <text evidence="1">Part of the 50S ribosomal subunit. Forms a bridge to the 30S subunit in the 70S ribosome.</text>
</comment>
<comment type="similarity">
    <text evidence="1">Belongs to the universal ribosomal protein uL2 family.</text>
</comment>
<accession>B2G8X5</accession>
<sequence length="281" mass="30470">MGIRKYKATTNGRRNMNGYDFAEITKTTPEKSLLAPLKHTAGRNSYGHITVRHRGGGTKRQYRIIDFKRIKDDVPATVKAIEYDPNRTANIALLVYADGTKSYIIAPKGLKVGMTVQSGPDADIKVGNALPLKNIPVGTVIHNIELKPGKGGQLARSAGASAQLLGKEEKYVLVRLSSGEVRMVLATCRATIGTVGNDEHALIIKGKAGRTRYAGQRPHVRGSVMNPNDHPHGGGEGKQPVGLPSPLSPWGKKTVGKKTRSHKARSNKFIVRGRKRGPHTR</sequence>
<dbReference type="EMBL" id="AP007281">
    <property type="protein sequence ID" value="BAG25907.1"/>
    <property type="molecule type" value="Genomic_DNA"/>
</dbReference>
<dbReference type="RefSeq" id="WP_003664563.1">
    <property type="nucleotide sequence ID" value="NC_010609.1"/>
</dbReference>
<dbReference type="SMR" id="B2G8X5"/>
<dbReference type="GeneID" id="77191476"/>
<dbReference type="KEGG" id="lrf:LAR_1391"/>
<dbReference type="HOGENOM" id="CLU_036235_2_1_9"/>
<dbReference type="GO" id="GO:0015934">
    <property type="term" value="C:large ribosomal subunit"/>
    <property type="evidence" value="ECO:0007669"/>
    <property type="project" value="InterPro"/>
</dbReference>
<dbReference type="GO" id="GO:0019843">
    <property type="term" value="F:rRNA binding"/>
    <property type="evidence" value="ECO:0007669"/>
    <property type="project" value="UniProtKB-UniRule"/>
</dbReference>
<dbReference type="GO" id="GO:0003735">
    <property type="term" value="F:structural constituent of ribosome"/>
    <property type="evidence" value="ECO:0007669"/>
    <property type="project" value="InterPro"/>
</dbReference>
<dbReference type="GO" id="GO:0016740">
    <property type="term" value="F:transferase activity"/>
    <property type="evidence" value="ECO:0007669"/>
    <property type="project" value="InterPro"/>
</dbReference>
<dbReference type="GO" id="GO:0002181">
    <property type="term" value="P:cytoplasmic translation"/>
    <property type="evidence" value="ECO:0007669"/>
    <property type="project" value="TreeGrafter"/>
</dbReference>
<dbReference type="FunFam" id="2.30.30.30:FF:000001">
    <property type="entry name" value="50S ribosomal protein L2"/>
    <property type="match status" value="1"/>
</dbReference>
<dbReference type="FunFam" id="2.40.50.140:FF:000003">
    <property type="entry name" value="50S ribosomal protein L2"/>
    <property type="match status" value="1"/>
</dbReference>
<dbReference type="FunFam" id="4.10.950.10:FF:000001">
    <property type="entry name" value="50S ribosomal protein L2"/>
    <property type="match status" value="1"/>
</dbReference>
<dbReference type="Gene3D" id="2.30.30.30">
    <property type="match status" value="1"/>
</dbReference>
<dbReference type="Gene3D" id="2.40.50.140">
    <property type="entry name" value="Nucleic acid-binding proteins"/>
    <property type="match status" value="1"/>
</dbReference>
<dbReference type="Gene3D" id="4.10.950.10">
    <property type="entry name" value="Ribosomal protein L2, domain 3"/>
    <property type="match status" value="1"/>
</dbReference>
<dbReference type="HAMAP" id="MF_01320_B">
    <property type="entry name" value="Ribosomal_uL2_B"/>
    <property type="match status" value="1"/>
</dbReference>
<dbReference type="InterPro" id="IPR012340">
    <property type="entry name" value="NA-bd_OB-fold"/>
</dbReference>
<dbReference type="InterPro" id="IPR014722">
    <property type="entry name" value="Rib_uL2_dom2"/>
</dbReference>
<dbReference type="InterPro" id="IPR002171">
    <property type="entry name" value="Ribosomal_uL2"/>
</dbReference>
<dbReference type="InterPro" id="IPR005880">
    <property type="entry name" value="Ribosomal_uL2_bac/org-type"/>
</dbReference>
<dbReference type="InterPro" id="IPR022669">
    <property type="entry name" value="Ribosomal_uL2_C"/>
</dbReference>
<dbReference type="InterPro" id="IPR022671">
    <property type="entry name" value="Ribosomal_uL2_CS"/>
</dbReference>
<dbReference type="InterPro" id="IPR014726">
    <property type="entry name" value="Ribosomal_uL2_dom3"/>
</dbReference>
<dbReference type="InterPro" id="IPR022666">
    <property type="entry name" value="Ribosomal_uL2_RNA-bd_dom"/>
</dbReference>
<dbReference type="InterPro" id="IPR008991">
    <property type="entry name" value="Translation_prot_SH3-like_sf"/>
</dbReference>
<dbReference type="NCBIfam" id="TIGR01171">
    <property type="entry name" value="rplB_bact"/>
    <property type="match status" value="1"/>
</dbReference>
<dbReference type="PANTHER" id="PTHR13691:SF5">
    <property type="entry name" value="LARGE RIBOSOMAL SUBUNIT PROTEIN UL2M"/>
    <property type="match status" value="1"/>
</dbReference>
<dbReference type="PANTHER" id="PTHR13691">
    <property type="entry name" value="RIBOSOMAL PROTEIN L2"/>
    <property type="match status" value="1"/>
</dbReference>
<dbReference type="Pfam" id="PF00181">
    <property type="entry name" value="Ribosomal_L2"/>
    <property type="match status" value="1"/>
</dbReference>
<dbReference type="Pfam" id="PF03947">
    <property type="entry name" value="Ribosomal_L2_C"/>
    <property type="match status" value="1"/>
</dbReference>
<dbReference type="PIRSF" id="PIRSF002158">
    <property type="entry name" value="Ribosomal_L2"/>
    <property type="match status" value="1"/>
</dbReference>
<dbReference type="SMART" id="SM01383">
    <property type="entry name" value="Ribosomal_L2"/>
    <property type="match status" value="1"/>
</dbReference>
<dbReference type="SMART" id="SM01382">
    <property type="entry name" value="Ribosomal_L2_C"/>
    <property type="match status" value="1"/>
</dbReference>
<dbReference type="SUPFAM" id="SSF50249">
    <property type="entry name" value="Nucleic acid-binding proteins"/>
    <property type="match status" value="1"/>
</dbReference>
<dbReference type="SUPFAM" id="SSF50104">
    <property type="entry name" value="Translation proteins SH3-like domain"/>
    <property type="match status" value="1"/>
</dbReference>
<dbReference type="PROSITE" id="PS00467">
    <property type="entry name" value="RIBOSOMAL_L2"/>
    <property type="match status" value="1"/>
</dbReference>
<organism>
    <name type="scientific">Limosilactobacillus reuteri subsp. reuteri (strain JCM 1112)</name>
    <name type="common">Lactobacillus reuteri</name>
    <dbReference type="NCBI Taxonomy" id="557433"/>
    <lineage>
        <taxon>Bacteria</taxon>
        <taxon>Bacillati</taxon>
        <taxon>Bacillota</taxon>
        <taxon>Bacilli</taxon>
        <taxon>Lactobacillales</taxon>
        <taxon>Lactobacillaceae</taxon>
        <taxon>Limosilactobacillus</taxon>
    </lineage>
</organism>
<evidence type="ECO:0000255" key="1">
    <source>
        <dbReference type="HAMAP-Rule" id="MF_01320"/>
    </source>
</evidence>
<evidence type="ECO:0000256" key="2">
    <source>
        <dbReference type="SAM" id="MobiDB-lite"/>
    </source>
</evidence>
<evidence type="ECO:0000305" key="3"/>
<name>RL2_LIMRJ</name>